<evidence type="ECO:0000255" key="1">
    <source>
        <dbReference type="HAMAP-Rule" id="MF_00148"/>
    </source>
</evidence>
<dbReference type="EC" id="3.2.2.27" evidence="1"/>
<dbReference type="EMBL" id="CP000112">
    <property type="protein sequence ID" value="ABB37315.1"/>
    <property type="molecule type" value="Genomic_DNA"/>
</dbReference>
<dbReference type="RefSeq" id="WP_011366635.1">
    <property type="nucleotide sequence ID" value="NC_007519.1"/>
</dbReference>
<dbReference type="SMR" id="Q315T1"/>
<dbReference type="STRING" id="207559.Dde_0514"/>
<dbReference type="KEGG" id="dde:Dde_0514"/>
<dbReference type="eggNOG" id="COG0692">
    <property type="taxonomic scope" value="Bacteria"/>
</dbReference>
<dbReference type="HOGENOM" id="CLU_032162_3_1_7"/>
<dbReference type="Proteomes" id="UP000002710">
    <property type="component" value="Chromosome"/>
</dbReference>
<dbReference type="GO" id="GO:0005737">
    <property type="term" value="C:cytoplasm"/>
    <property type="evidence" value="ECO:0007669"/>
    <property type="project" value="UniProtKB-SubCell"/>
</dbReference>
<dbReference type="GO" id="GO:0004844">
    <property type="term" value="F:uracil DNA N-glycosylase activity"/>
    <property type="evidence" value="ECO:0007669"/>
    <property type="project" value="UniProtKB-UniRule"/>
</dbReference>
<dbReference type="GO" id="GO:0097510">
    <property type="term" value="P:base-excision repair, AP site formation via deaminated base removal"/>
    <property type="evidence" value="ECO:0007669"/>
    <property type="project" value="TreeGrafter"/>
</dbReference>
<dbReference type="CDD" id="cd10027">
    <property type="entry name" value="UDG-F1-like"/>
    <property type="match status" value="1"/>
</dbReference>
<dbReference type="Gene3D" id="3.40.470.10">
    <property type="entry name" value="Uracil-DNA glycosylase-like domain"/>
    <property type="match status" value="1"/>
</dbReference>
<dbReference type="HAMAP" id="MF_00148">
    <property type="entry name" value="UDG"/>
    <property type="match status" value="1"/>
</dbReference>
<dbReference type="InterPro" id="IPR002043">
    <property type="entry name" value="UDG_fam1"/>
</dbReference>
<dbReference type="InterPro" id="IPR018085">
    <property type="entry name" value="Ura-DNA_Glyclase_AS"/>
</dbReference>
<dbReference type="InterPro" id="IPR005122">
    <property type="entry name" value="Uracil-DNA_glycosylase-like"/>
</dbReference>
<dbReference type="InterPro" id="IPR036895">
    <property type="entry name" value="Uracil-DNA_glycosylase-like_sf"/>
</dbReference>
<dbReference type="NCBIfam" id="NF003588">
    <property type="entry name" value="PRK05254.1-1"/>
    <property type="match status" value="1"/>
</dbReference>
<dbReference type="NCBIfam" id="NF003589">
    <property type="entry name" value="PRK05254.1-2"/>
    <property type="match status" value="1"/>
</dbReference>
<dbReference type="NCBIfam" id="NF003591">
    <property type="entry name" value="PRK05254.1-4"/>
    <property type="match status" value="1"/>
</dbReference>
<dbReference type="NCBIfam" id="NF003592">
    <property type="entry name" value="PRK05254.1-5"/>
    <property type="match status" value="1"/>
</dbReference>
<dbReference type="NCBIfam" id="TIGR00628">
    <property type="entry name" value="ung"/>
    <property type="match status" value="1"/>
</dbReference>
<dbReference type="PANTHER" id="PTHR11264">
    <property type="entry name" value="URACIL-DNA GLYCOSYLASE"/>
    <property type="match status" value="1"/>
</dbReference>
<dbReference type="PANTHER" id="PTHR11264:SF0">
    <property type="entry name" value="URACIL-DNA GLYCOSYLASE"/>
    <property type="match status" value="1"/>
</dbReference>
<dbReference type="Pfam" id="PF03167">
    <property type="entry name" value="UDG"/>
    <property type="match status" value="1"/>
</dbReference>
<dbReference type="SMART" id="SM00986">
    <property type="entry name" value="UDG"/>
    <property type="match status" value="1"/>
</dbReference>
<dbReference type="SMART" id="SM00987">
    <property type="entry name" value="UreE_C"/>
    <property type="match status" value="1"/>
</dbReference>
<dbReference type="SUPFAM" id="SSF52141">
    <property type="entry name" value="Uracil-DNA glycosylase-like"/>
    <property type="match status" value="1"/>
</dbReference>
<dbReference type="PROSITE" id="PS00130">
    <property type="entry name" value="U_DNA_GLYCOSYLASE"/>
    <property type="match status" value="1"/>
</dbReference>
<name>UNG_OLEA2</name>
<comment type="function">
    <text evidence="1">Excises uracil residues from the DNA which can arise as a result of misincorporation of dUMP residues by DNA polymerase or due to deamination of cytosine.</text>
</comment>
<comment type="catalytic activity">
    <reaction evidence="1">
        <text>Hydrolyzes single-stranded DNA or mismatched double-stranded DNA and polynucleotides, releasing free uracil.</text>
        <dbReference type="EC" id="3.2.2.27"/>
    </reaction>
</comment>
<comment type="subcellular location">
    <subcellularLocation>
        <location evidence="1">Cytoplasm</location>
    </subcellularLocation>
</comment>
<comment type="similarity">
    <text evidence="1">Belongs to the uracil-DNA glycosylase (UDG) superfamily. UNG family.</text>
</comment>
<feature type="chain" id="PRO_1000009883" description="Uracil-DNA glycosylase">
    <location>
        <begin position="1"/>
        <end position="233"/>
    </location>
</feature>
<feature type="active site" description="Proton acceptor" evidence="1">
    <location>
        <position position="70"/>
    </location>
</feature>
<gene>
    <name evidence="1" type="primary">ung</name>
    <name type="ordered locus">Dde_0514</name>
</gene>
<accession>Q315T1</accession>
<proteinExistence type="inferred from homology"/>
<reference key="1">
    <citation type="journal article" date="2011" name="J. Bacteriol.">
        <title>Complete genome sequence and updated annotation of Desulfovibrio alaskensis G20.</title>
        <authorList>
            <person name="Hauser L.J."/>
            <person name="Land M.L."/>
            <person name="Brown S.D."/>
            <person name="Larimer F."/>
            <person name="Keller K.L."/>
            <person name="Rapp-Giles B.J."/>
            <person name="Price M.N."/>
            <person name="Lin M."/>
            <person name="Bruce D.C."/>
            <person name="Detter J.C."/>
            <person name="Tapia R."/>
            <person name="Han C.S."/>
            <person name="Goodwin L.A."/>
            <person name="Cheng J.F."/>
            <person name="Pitluck S."/>
            <person name="Copeland A."/>
            <person name="Lucas S."/>
            <person name="Nolan M."/>
            <person name="Lapidus A.L."/>
            <person name="Palumbo A.V."/>
            <person name="Wall J.D."/>
        </authorList>
    </citation>
    <scope>NUCLEOTIDE SEQUENCE [LARGE SCALE GENOMIC DNA]</scope>
    <source>
        <strain>ATCC BAA-1058 / DSM 17464 / G20</strain>
    </source>
</reference>
<sequence>MSRSDVFADAPPADWAQAVPLLREGAHLPLLRSVARLRRSKTVYPPEGQVFAALHCTPLHTVRVVIVGQDPYHGAGQAHGLAFSVPQGVKPPPSLRNVLKEAAAQKPEAPAAAGMQHNGVQTDLTPWAEQGVLLLNTALTVEAGRAGSHAALGWHAVTDDIIRTVSERCPAVVFMLWGNHARQKAALVDTGRHLLLESVHPSPFSAHKGFLGCGHFVTANSWLAARGLLPVLW</sequence>
<protein>
    <recommendedName>
        <fullName evidence="1">Uracil-DNA glycosylase</fullName>
        <shortName evidence="1">UDG</shortName>
        <ecNumber evidence="1">3.2.2.27</ecNumber>
    </recommendedName>
</protein>
<keyword id="KW-0963">Cytoplasm</keyword>
<keyword id="KW-0227">DNA damage</keyword>
<keyword id="KW-0234">DNA repair</keyword>
<keyword id="KW-0378">Hydrolase</keyword>
<keyword id="KW-1185">Reference proteome</keyword>
<organism>
    <name type="scientific">Oleidesulfovibrio alaskensis (strain ATCC BAA-1058 / DSM 17464 / G20)</name>
    <name type="common">Desulfovibrio alaskensis</name>
    <dbReference type="NCBI Taxonomy" id="207559"/>
    <lineage>
        <taxon>Bacteria</taxon>
        <taxon>Pseudomonadati</taxon>
        <taxon>Thermodesulfobacteriota</taxon>
        <taxon>Desulfovibrionia</taxon>
        <taxon>Desulfovibrionales</taxon>
        <taxon>Desulfovibrionaceae</taxon>
        <taxon>Oleidesulfovibrio</taxon>
    </lineage>
</organism>